<evidence type="ECO:0000255" key="1">
    <source>
        <dbReference type="HAMAP-Rule" id="MF_00176"/>
    </source>
</evidence>
<sequence length="425" mass="48181">MLDLKRIRTDFDTVAAKLKNRGVSEDTLTHLKELDEKRRTLLVQSEELKAERNIASAAIAQAKRQKEDATQQIADMQKVSADIKTIDNQLVAIDQQVADIITVLPNTPHDSVPVGADEEDNVEIRRWGTPRDFDFEVKAHWDLGEDLDILDWERGAKVTGARFLFYKNLGARLERALYNFMLDEHIKEGYQEIITPYMVNHDSMFGTGQYPKFKEDTFELADTNFVLIPTAEVPLTNYYRGEILDGKELPIYFTAMSPSFRSEAGSAGRDTRGLIRLHQFHKVEMVKFAKPEESYQELEKMTANAENILQKLGLPYRVISLCTGDMGFSAAKTYDLEVWIPAQNTYREISSCSNTEDFQARRAQIRYRDEADGKVKLLHTLNGSGLAVGRTVAAILENYQNEDGSVTIPEVLRPYMGGETVISPK</sequence>
<protein>
    <recommendedName>
        <fullName evidence="1">Serine--tRNA ligase</fullName>
        <ecNumber evidence="1">6.1.1.11</ecNumber>
    </recommendedName>
    <alternativeName>
        <fullName evidence="1">Seryl-tRNA synthetase</fullName>
        <shortName evidence="1">SerRS</shortName>
    </alternativeName>
    <alternativeName>
        <fullName evidence="1">Seryl-tRNA(Ser/Sec) synthetase</fullName>
    </alternativeName>
</protein>
<dbReference type="EC" id="6.1.1.11" evidence="1"/>
<dbReference type="EMBL" id="AE009949">
    <property type="protein sequence ID" value="AAL98334.1"/>
    <property type="molecule type" value="Genomic_DNA"/>
</dbReference>
<dbReference type="RefSeq" id="WP_011018153.1">
    <property type="nucleotide sequence ID" value="NC_003485.1"/>
</dbReference>
<dbReference type="SMR" id="Q8NZN7"/>
<dbReference type="KEGG" id="spm:spyM18_1814"/>
<dbReference type="HOGENOM" id="CLU_023797_1_1_9"/>
<dbReference type="UniPathway" id="UPA00906">
    <property type="reaction ID" value="UER00895"/>
</dbReference>
<dbReference type="GO" id="GO:0005737">
    <property type="term" value="C:cytoplasm"/>
    <property type="evidence" value="ECO:0007669"/>
    <property type="project" value="UniProtKB-SubCell"/>
</dbReference>
<dbReference type="GO" id="GO:0005524">
    <property type="term" value="F:ATP binding"/>
    <property type="evidence" value="ECO:0007669"/>
    <property type="project" value="UniProtKB-UniRule"/>
</dbReference>
<dbReference type="GO" id="GO:0140096">
    <property type="term" value="F:catalytic activity, acting on a protein"/>
    <property type="evidence" value="ECO:0007669"/>
    <property type="project" value="UniProtKB-ARBA"/>
</dbReference>
<dbReference type="GO" id="GO:0004828">
    <property type="term" value="F:serine-tRNA ligase activity"/>
    <property type="evidence" value="ECO:0007669"/>
    <property type="project" value="UniProtKB-UniRule"/>
</dbReference>
<dbReference type="GO" id="GO:0016740">
    <property type="term" value="F:transferase activity"/>
    <property type="evidence" value="ECO:0007669"/>
    <property type="project" value="UniProtKB-ARBA"/>
</dbReference>
<dbReference type="GO" id="GO:0016260">
    <property type="term" value="P:selenocysteine biosynthetic process"/>
    <property type="evidence" value="ECO:0007669"/>
    <property type="project" value="UniProtKB-UniRule"/>
</dbReference>
<dbReference type="GO" id="GO:0006434">
    <property type="term" value="P:seryl-tRNA aminoacylation"/>
    <property type="evidence" value="ECO:0007669"/>
    <property type="project" value="UniProtKB-UniRule"/>
</dbReference>
<dbReference type="CDD" id="cd00770">
    <property type="entry name" value="SerRS_core"/>
    <property type="match status" value="1"/>
</dbReference>
<dbReference type="Gene3D" id="3.30.930.10">
    <property type="entry name" value="Bira Bifunctional Protein, Domain 2"/>
    <property type="match status" value="1"/>
</dbReference>
<dbReference type="Gene3D" id="1.10.287.40">
    <property type="entry name" value="Serine-tRNA synthetase, tRNA binding domain"/>
    <property type="match status" value="1"/>
</dbReference>
<dbReference type="HAMAP" id="MF_00176">
    <property type="entry name" value="Ser_tRNA_synth_type1"/>
    <property type="match status" value="1"/>
</dbReference>
<dbReference type="InterPro" id="IPR002314">
    <property type="entry name" value="aa-tRNA-synt_IIb"/>
</dbReference>
<dbReference type="InterPro" id="IPR006195">
    <property type="entry name" value="aa-tRNA-synth_II"/>
</dbReference>
<dbReference type="InterPro" id="IPR045864">
    <property type="entry name" value="aa-tRNA-synth_II/BPL/LPL"/>
</dbReference>
<dbReference type="InterPro" id="IPR002317">
    <property type="entry name" value="Ser-tRNA-ligase_type_1"/>
</dbReference>
<dbReference type="InterPro" id="IPR015866">
    <property type="entry name" value="Ser-tRNA-synth_1_N"/>
</dbReference>
<dbReference type="InterPro" id="IPR042103">
    <property type="entry name" value="SerRS_1_N_sf"/>
</dbReference>
<dbReference type="InterPro" id="IPR033729">
    <property type="entry name" value="SerRS_core"/>
</dbReference>
<dbReference type="InterPro" id="IPR010978">
    <property type="entry name" value="tRNA-bd_arm"/>
</dbReference>
<dbReference type="NCBIfam" id="TIGR00414">
    <property type="entry name" value="serS"/>
    <property type="match status" value="1"/>
</dbReference>
<dbReference type="PANTHER" id="PTHR43697:SF1">
    <property type="entry name" value="SERINE--TRNA LIGASE"/>
    <property type="match status" value="1"/>
</dbReference>
<dbReference type="PANTHER" id="PTHR43697">
    <property type="entry name" value="SERYL-TRNA SYNTHETASE"/>
    <property type="match status" value="1"/>
</dbReference>
<dbReference type="Pfam" id="PF02403">
    <property type="entry name" value="Seryl_tRNA_N"/>
    <property type="match status" value="1"/>
</dbReference>
<dbReference type="Pfam" id="PF00587">
    <property type="entry name" value="tRNA-synt_2b"/>
    <property type="match status" value="1"/>
</dbReference>
<dbReference type="PIRSF" id="PIRSF001529">
    <property type="entry name" value="Ser-tRNA-synth_IIa"/>
    <property type="match status" value="1"/>
</dbReference>
<dbReference type="PRINTS" id="PR00981">
    <property type="entry name" value="TRNASYNTHSER"/>
</dbReference>
<dbReference type="SUPFAM" id="SSF55681">
    <property type="entry name" value="Class II aaRS and biotin synthetases"/>
    <property type="match status" value="1"/>
</dbReference>
<dbReference type="SUPFAM" id="SSF46589">
    <property type="entry name" value="tRNA-binding arm"/>
    <property type="match status" value="1"/>
</dbReference>
<dbReference type="PROSITE" id="PS50862">
    <property type="entry name" value="AA_TRNA_LIGASE_II"/>
    <property type="match status" value="1"/>
</dbReference>
<proteinExistence type="inferred from homology"/>
<organism>
    <name type="scientific">Streptococcus pyogenes serotype M18 (strain MGAS8232)</name>
    <dbReference type="NCBI Taxonomy" id="186103"/>
    <lineage>
        <taxon>Bacteria</taxon>
        <taxon>Bacillati</taxon>
        <taxon>Bacillota</taxon>
        <taxon>Bacilli</taxon>
        <taxon>Lactobacillales</taxon>
        <taxon>Streptococcaceae</taxon>
        <taxon>Streptococcus</taxon>
    </lineage>
</organism>
<comment type="function">
    <text evidence="1">Catalyzes the attachment of serine to tRNA(Ser). Is also able to aminoacylate tRNA(Sec) with serine, to form the misacylated tRNA L-seryl-tRNA(Sec), which will be further converted into selenocysteinyl-tRNA(Sec).</text>
</comment>
<comment type="catalytic activity">
    <reaction evidence="1">
        <text>tRNA(Ser) + L-serine + ATP = L-seryl-tRNA(Ser) + AMP + diphosphate + H(+)</text>
        <dbReference type="Rhea" id="RHEA:12292"/>
        <dbReference type="Rhea" id="RHEA-COMP:9669"/>
        <dbReference type="Rhea" id="RHEA-COMP:9703"/>
        <dbReference type="ChEBI" id="CHEBI:15378"/>
        <dbReference type="ChEBI" id="CHEBI:30616"/>
        <dbReference type="ChEBI" id="CHEBI:33019"/>
        <dbReference type="ChEBI" id="CHEBI:33384"/>
        <dbReference type="ChEBI" id="CHEBI:78442"/>
        <dbReference type="ChEBI" id="CHEBI:78533"/>
        <dbReference type="ChEBI" id="CHEBI:456215"/>
        <dbReference type="EC" id="6.1.1.11"/>
    </reaction>
</comment>
<comment type="catalytic activity">
    <reaction evidence="1">
        <text>tRNA(Sec) + L-serine + ATP = L-seryl-tRNA(Sec) + AMP + diphosphate + H(+)</text>
        <dbReference type="Rhea" id="RHEA:42580"/>
        <dbReference type="Rhea" id="RHEA-COMP:9742"/>
        <dbReference type="Rhea" id="RHEA-COMP:10128"/>
        <dbReference type="ChEBI" id="CHEBI:15378"/>
        <dbReference type="ChEBI" id="CHEBI:30616"/>
        <dbReference type="ChEBI" id="CHEBI:33019"/>
        <dbReference type="ChEBI" id="CHEBI:33384"/>
        <dbReference type="ChEBI" id="CHEBI:78442"/>
        <dbReference type="ChEBI" id="CHEBI:78533"/>
        <dbReference type="ChEBI" id="CHEBI:456215"/>
        <dbReference type="EC" id="6.1.1.11"/>
    </reaction>
</comment>
<comment type="pathway">
    <text evidence="1">Aminoacyl-tRNA biosynthesis; selenocysteinyl-tRNA(Sec) biosynthesis; L-seryl-tRNA(Sec) from L-serine and tRNA(Sec): step 1/1.</text>
</comment>
<comment type="subunit">
    <text evidence="1">Homodimer. The tRNA molecule binds across the dimer.</text>
</comment>
<comment type="subcellular location">
    <subcellularLocation>
        <location evidence="1">Cytoplasm</location>
    </subcellularLocation>
</comment>
<comment type="domain">
    <text evidence="1">Consists of two distinct domains, a catalytic core and a N-terminal extension that is involved in tRNA binding.</text>
</comment>
<comment type="similarity">
    <text evidence="1">Belongs to the class-II aminoacyl-tRNA synthetase family. Type-1 seryl-tRNA synthetase subfamily.</text>
</comment>
<keyword id="KW-0030">Aminoacyl-tRNA synthetase</keyword>
<keyword id="KW-0067">ATP-binding</keyword>
<keyword id="KW-0963">Cytoplasm</keyword>
<keyword id="KW-0436">Ligase</keyword>
<keyword id="KW-0547">Nucleotide-binding</keyword>
<keyword id="KW-0648">Protein biosynthesis</keyword>
<name>SYS_STRP8</name>
<feature type="chain" id="PRO_0000122138" description="Serine--tRNA ligase">
    <location>
        <begin position="1"/>
        <end position="425"/>
    </location>
</feature>
<feature type="binding site" evidence="1">
    <location>
        <begin position="230"/>
        <end position="232"/>
    </location>
    <ligand>
        <name>L-serine</name>
        <dbReference type="ChEBI" id="CHEBI:33384"/>
    </ligand>
</feature>
<feature type="binding site" evidence="1">
    <location>
        <begin position="261"/>
        <end position="263"/>
    </location>
    <ligand>
        <name>ATP</name>
        <dbReference type="ChEBI" id="CHEBI:30616"/>
    </ligand>
</feature>
<feature type="binding site" evidence="1">
    <location>
        <position position="284"/>
    </location>
    <ligand>
        <name>L-serine</name>
        <dbReference type="ChEBI" id="CHEBI:33384"/>
    </ligand>
</feature>
<feature type="binding site" evidence="1">
    <location>
        <begin position="348"/>
        <end position="351"/>
    </location>
    <ligand>
        <name>ATP</name>
        <dbReference type="ChEBI" id="CHEBI:30616"/>
    </ligand>
</feature>
<feature type="binding site" evidence="1">
    <location>
        <position position="384"/>
    </location>
    <ligand>
        <name>L-serine</name>
        <dbReference type="ChEBI" id="CHEBI:33384"/>
    </ligand>
</feature>
<reference key="1">
    <citation type="journal article" date="2002" name="Proc. Natl. Acad. Sci. U.S.A.">
        <title>Genome sequence and comparative microarray analysis of serotype M18 group A Streptococcus strains associated with acute rheumatic fever outbreaks.</title>
        <authorList>
            <person name="Smoot J.C."/>
            <person name="Barbian K.D."/>
            <person name="Van Gompel J.J."/>
            <person name="Smoot L.M."/>
            <person name="Chaussee M.S."/>
            <person name="Sylva G.L."/>
            <person name="Sturdevant D.E."/>
            <person name="Ricklefs S.M."/>
            <person name="Porcella S.F."/>
            <person name="Parkins L.D."/>
            <person name="Beres S.B."/>
            <person name="Campbell D.S."/>
            <person name="Smith T.M."/>
            <person name="Zhang Q."/>
            <person name="Kapur V."/>
            <person name="Daly J.A."/>
            <person name="Veasy L.G."/>
            <person name="Musser J.M."/>
        </authorList>
    </citation>
    <scope>NUCLEOTIDE SEQUENCE [LARGE SCALE GENOMIC DNA]</scope>
    <source>
        <strain>MGAS8232</strain>
    </source>
</reference>
<gene>
    <name evidence="1" type="primary">serS</name>
    <name type="ordered locus">spyM18_1814</name>
</gene>
<accession>Q8NZN7</accession>